<accession>P24072</accession>
<accession>P37583</accession>
<comment type="function">
    <text evidence="5 6">Involved in the transmission of sensory signals from the chemoreceptors to the flagellar motors. Phosphorylated CheY interacts with the flagella switch components FliM and FliY, which causes counterclockwise rotation of the flagella, resulting in smooth swimming.</text>
</comment>
<comment type="cofactor">
    <cofactor evidence="2">
        <name>Mg(2+)</name>
        <dbReference type="ChEBI" id="CHEBI:18420"/>
    </cofactor>
    <text evidence="2">Binds 1 Mg(2+) ion per subunit.</text>
</comment>
<comment type="subunit">
    <text evidence="5">Phosphorylated CheY binds to FliM and FliY.</text>
</comment>
<comment type="subcellular location">
    <subcellularLocation>
        <location evidence="8">Cytoplasm</location>
    </subcellularLocation>
</comment>
<comment type="PTM">
    <text evidence="5 6">Phosphorylated by CheA. Dephosphorylated (inactivated) by FliY and CheC.</text>
</comment>
<comment type="miscellaneous">
    <text>The signaling mechanism of chemotaxis in B.subtilis appears to be inverted in comparison to E.coli.</text>
</comment>
<evidence type="ECO:0000250" key="1">
    <source>
        <dbReference type="UniProtKB" id="A0A0H3AMJ9"/>
    </source>
</evidence>
<evidence type="ECO:0000250" key="2">
    <source>
        <dbReference type="UniProtKB" id="P0AE67"/>
    </source>
</evidence>
<evidence type="ECO:0000250" key="3">
    <source>
        <dbReference type="UniProtKB" id="Q56312"/>
    </source>
</evidence>
<evidence type="ECO:0000255" key="4">
    <source>
        <dbReference type="PROSITE-ProRule" id="PRU00169"/>
    </source>
</evidence>
<evidence type="ECO:0000269" key="5">
    <source>
    </source>
</evidence>
<evidence type="ECO:0000269" key="6">
    <source>
    </source>
</evidence>
<evidence type="ECO:0000269" key="7">
    <source>
    </source>
</evidence>
<evidence type="ECO:0000305" key="8"/>
<protein>
    <recommendedName>
        <fullName>Chemotaxis protein CheY</fullName>
    </recommendedName>
</protein>
<feature type="initiator methionine" description="Removed" evidence="7">
    <location>
        <position position="1"/>
    </location>
</feature>
<feature type="chain" id="PRO_0000081057" description="Chemotaxis protein CheY">
    <location>
        <begin position="2"/>
        <end position="120"/>
    </location>
</feature>
<feature type="domain" description="Response regulatory" evidence="4">
    <location>
        <begin position="4"/>
        <end position="119"/>
    </location>
</feature>
<feature type="binding site" evidence="1">
    <location>
        <position position="9"/>
    </location>
    <ligand>
        <name>Mg(2+)</name>
        <dbReference type="ChEBI" id="CHEBI:18420"/>
    </ligand>
</feature>
<feature type="binding site" evidence="2">
    <location>
        <position position="10"/>
    </location>
    <ligand>
        <name>Mg(2+)</name>
        <dbReference type="ChEBI" id="CHEBI:18420"/>
    </ligand>
</feature>
<feature type="binding site" evidence="2">
    <location>
        <position position="54"/>
    </location>
    <ligand>
        <name>Mg(2+)</name>
        <dbReference type="ChEBI" id="CHEBI:18420"/>
    </ligand>
</feature>
<feature type="binding site" evidence="3">
    <location>
        <position position="56"/>
    </location>
    <ligand>
        <name>Mg(2+)</name>
        <dbReference type="ChEBI" id="CHEBI:18420"/>
    </ligand>
</feature>
<feature type="modified residue" description="4-aspartylphosphate" evidence="4">
    <location>
        <position position="54"/>
    </location>
</feature>
<feature type="mutagenesis site" description="No chemotaxis, tumbly swimming behavior and shows exclusively clockwise rotation." evidence="6">
    <original>D</original>
    <variation>K</variation>
    <variation>R</variation>
    <location>
        <position position="10"/>
    </location>
</feature>
<feature type="mutagenesis site" description="Lack of phosphorylation. No chemotaxis, tumbly swimming behavior and shows exclusively clockwise rotation." evidence="5 6">
    <original>D</original>
    <variation>A</variation>
    <location>
        <position position="54"/>
    </location>
</feature>
<feature type="mutagenesis site" description="No chemotaxis, tumbly swimming behavior and shows exclusively clockwise rotation." evidence="5 6">
    <original>D</original>
    <variation>S</variation>
    <variation>T</variation>
    <location>
        <position position="54"/>
    </location>
</feature>
<proteinExistence type="evidence at protein level"/>
<sequence>MAHRILIVDDAAFMRMMIKDILVKNGFEVVAEAENGAQAVEKYKEHSPDLVTMDITMPEMDGITALKEIKQIDAQARIIMCSAMGQQSMVIDAIQAGAKDFIVKPFQADRVLEAINKTLN</sequence>
<gene>
    <name type="primary">cheY</name>
    <name type="synonym">cheB</name>
    <name type="ordered locus">BSU16330</name>
</gene>
<reference key="1">
    <citation type="journal article" date="1991" name="J. Biol. Chem.">
        <title>Sequence and characterization of Bacillus subtilis CheB, a homolog of Escherichia coli CheY, and its role in a different mechanism of chemotaxis.</title>
        <authorList>
            <person name="Bischoff D.S."/>
            <person name="Ordal G.W."/>
        </authorList>
    </citation>
    <scope>NUCLEOTIDE SEQUENCE [GENOMIC DNA]</scope>
    <source>
        <strain>168 / OI1085</strain>
    </source>
</reference>
<reference key="2">
    <citation type="journal article" date="1997" name="Nature">
        <title>The complete genome sequence of the Gram-positive bacterium Bacillus subtilis.</title>
        <authorList>
            <person name="Kunst F."/>
            <person name="Ogasawara N."/>
            <person name="Moszer I."/>
            <person name="Albertini A.M."/>
            <person name="Alloni G."/>
            <person name="Azevedo V."/>
            <person name="Bertero M.G."/>
            <person name="Bessieres P."/>
            <person name="Bolotin A."/>
            <person name="Borchert S."/>
            <person name="Borriss R."/>
            <person name="Boursier L."/>
            <person name="Brans A."/>
            <person name="Braun M."/>
            <person name="Brignell S.C."/>
            <person name="Bron S."/>
            <person name="Brouillet S."/>
            <person name="Bruschi C.V."/>
            <person name="Caldwell B."/>
            <person name="Capuano V."/>
            <person name="Carter N.M."/>
            <person name="Choi S.-K."/>
            <person name="Codani J.-J."/>
            <person name="Connerton I.F."/>
            <person name="Cummings N.J."/>
            <person name="Daniel R.A."/>
            <person name="Denizot F."/>
            <person name="Devine K.M."/>
            <person name="Duesterhoeft A."/>
            <person name="Ehrlich S.D."/>
            <person name="Emmerson P.T."/>
            <person name="Entian K.-D."/>
            <person name="Errington J."/>
            <person name="Fabret C."/>
            <person name="Ferrari E."/>
            <person name="Foulger D."/>
            <person name="Fritz C."/>
            <person name="Fujita M."/>
            <person name="Fujita Y."/>
            <person name="Fuma S."/>
            <person name="Galizzi A."/>
            <person name="Galleron N."/>
            <person name="Ghim S.-Y."/>
            <person name="Glaser P."/>
            <person name="Goffeau A."/>
            <person name="Golightly E.J."/>
            <person name="Grandi G."/>
            <person name="Guiseppi G."/>
            <person name="Guy B.J."/>
            <person name="Haga K."/>
            <person name="Haiech J."/>
            <person name="Harwood C.R."/>
            <person name="Henaut A."/>
            <person name="Hilbert H."/>
            <person name="Holsappel S."/>
            <person name="Hosono S."/>
            <person name="Hullo M.-F."/>
            <person name="Itaya M."/>
            <person name="Jones L.-M."/>
            <person name="Joris B."/>
            <person name="Karamata D."/>
            <person name="Kasahara Y."/>
            <person name="Klaerr-Blanchard M."/>
            <person name="Klein C."/>
            <person name="Kobayashi Y."/>
            <person name="Koetter P."/>
            <person name="Koningstein G."/>
            <person name="Krogh S."/>
            <person name="Kumano M."/>
            <person name="Kurita K."/>
            <person name="Lapidus A."/>
            <person name="Lardinois S."/>
            <person name="Lauber J."/>
            <person name="Lazarevic V."/>
            <person name="Lee S.-M."/>
            <person name="Levine A."/>
            <person name="Liu H."/>
            <person name="Masuda S."/>
            <person name="Mauel C."/>
            <person name="Medigue C."/>
            <person name="Medina N."/>
            <person name="Mellado R.P."/>
            <person name="Mizuno M."/>
            <person name="Moestl D."/>
            <person name="Nakai S."/>
            <person name="Noback M."/>
            <person name="Noone D."/>
            <person name="O'Reilly M."/>
            <person name="Ogawa K."/>
            <person name="Ogiwara A."/>
            <person name="Oudega B."/>
            <person name="Park S.-H."/>
            <person name="Parro V."/>
            <person name="Pohl T.M."/>
            <person name="Portetelle D."/>
            <person name="Porwollik S."/>
            <person name="Prescott A.M."/>
            <person name="Presecan E."/>
            <person name="Pujic P."/>
            <person name="Purnelle B."/>
            <person name="Rapoport G."/>
            <person name="Rey M."/>
            <person name="Reynolds S."/>
            <person name="Rieger M."/>
            <person name="Rivolta C."/>
            <person name="Rocha E."/>
            <person name="Roche B."/>
            <person name="Rose M."/>
            <person name="Sadaie Y."/>
            <person name="Sato T."/>
            <person name="Scanlan E."/>
            <person name="Schleich S."/>
            <person name="Schroeter R."/>
            <person name="Scoffone F."/>
            <person name="Sekiguchi J."/>
            <person name="Sekowska A."/>
            <person name="Seror S.J."/>
            <person name="Serror P."/>
            <person name="Shin B.-S."/>
            <person name="Soldo B."/>
            <person name="Sorokin A."/>
            <person name="Tacconi E."/>
            <person name="Takagi T."/>
            <person name="Takahashi H."/>
            <person name="Takemaru K."/>
            <person name="Takeuchi M."/>
            <person name="Tamakoshi A."/>
            <person name="Tanaka T."/>
            <person name="Terpstra P."/>
            <person name="Tognoni A."/>
            <person name="Tosato V."/>
            <person name="Uchiyama S."/>
            <person name="Vandenbol M."/>
            <person name="Vannier F."/>
            <person name="Vassarotti A."/>
            <person name="Viari A."/>
            <person name="Wambutt R."/>
            <person name="Wedler E."/>
            <person name="Wedler H."/>
            <person name="Weitzenegger T."/>
            <person name="Winters P."/>
            <person name="Wipat A."/>
            <person name="Yamamoto H."/>
            <person name="Yamane K."/>
            <person name="Yasumoto K."/>
            <person name="Yata K."/>
            <person name="Yoshida K."/>
            <person name="Yoshikawa H.-F."/>
            <person name="Zumstein E."/>
            <person name="Yoshikawa H."/>
            <person name="Danchin A."/>
        </authorList>
    </citation>
    <scope>NUCLEOTIDE SEQUENCE [LARGE SCALE GENOMIC DNA]</scope>
    <source>
        <strain>168</strain>
    </source>
</reference>
<reference key="3">
    <citation type="journal article" date="1992" name="Mol. Microbiol.">
        <title>Identification and characterization of FliY, a novel component of the Bacillus subtilis flagellar switch complex.</title>
        <authorList>
            <person name="Bischoff D.S."/>
            <person name="Ordal G.W."/>
        </authorList>
    </citation>
    <scope>NUCLEOTIDE SEQUENCE [GENOMIC DNA] OF 1-8</scope>
    <source>
        <strain>168 / OI1085</strain>
    </source>
</reference>
<reference key="4">
    <citation type="journal article" date="1992" name="J. Bacteriol.">
        <title>Nucleotide sequences of Bacillus subtilis flagellar biosynthetic genes fliP and fliQ and identification of a novel flagellar gene, fliZ.</title>
        <authorList>
            <person name="Bischoff D.S."/>
            <person name="Weinreich M.D."/>
            <person name="Ordal G.W."/>
        </authorList>
    </citation>
    <scope>NUCLEOTIDE SEQUENCE [GENOMIC DNA] OF 96-120</scope>
    <source>
        <strain>168 / OI1085</strain>
    </source>
</reference>
<reference key="5">
    <citation type="journal article" date="1996" name="J. Bacteriol.">
        <title>Cold shock stress-induced proteins in Bacillus subtilis.</title>
        <authorList>
            <person name="Graumann P."/>
            <person name="Schroeder K."/>
            <person name="Schmid R."/>
            <person name="Marahiel M.A."/>
        </authorList>
    </citation>
    <scope>PROTEIN SEQUENCE OF 2-13</scope>
    <source>
        <strain>168 / JH642</strain>
    </source>
</reference>
<reference key="6">
    <citation type="journal article" date="1993" name="Biochemistry">
        <title>Purification and characterization of Bacillus subtilis CheY.</title>
        <authorList>
            <person name="Bischoff D.S."/>
            <person name="Bourret R.B."/>
            <person name="Kirsch M.L."/>
            <person name="Ordal G.W."/>
        </authorList>
    </citation>
    <scope>FUNCTION</scope>
    <scope>PHOSPHORYLATION BY CHEA</scope>
    <scope>MUTAGENESIS OF ASP-10 AND ASP-54</scope>
    <source>
        <strain>168 / OI1085</strain>
    </source>
</reference>
<reference key="7">
    <citation type="journal article" date="2003" name="J. Biol. Chem.">
        <title>Bacillus subtilis hydrolyzes CheY-P at the location of its action, the flagellar switch.</title>
        <authorList>
            <person name="Szurmant H."/>
            <person name="Bunn M.W."/>
            <person name="Cannistraro V.J."/>
            <person name="Ordal G.W."/>
        </authorList>
    </citation>
    <scope>FUNCTION</scope>
    <scope>PHOSPHORYLATION AT ASP-54</scope>
    <scope>DEPHOSPHORYLATION BY FLIY</scope>
    <scope>INTERACTION WITH FLIM AND FLIY</scope>
    <scope>MUTAGENESIS OF ASP-54</scope>
    <source>
        <strain>168 / OI1085</strain>
    </source>
</reference>
<reference key="8">
    <citation type="journal article" date="2004" name="J. Biol. Chem.">
        <title>Bacillus subtilis CheC and FliY are members of a novel class of CheY-P-hydrolyzing proteins in the chemotactic signal transduction cascade.</title>
        <authorList>
            <person name="Szurmant H."/>
            <person name="Muff T.J."/>
            <person name="Ordal G.W."/>
        </authorList>
    </citation>
    <scope>DEPHOSPHORYLATION BY FLIY AND CHEC</scope>
    <source>
        <strain>168 / OI1085</strain>
    </source>
</reference>
<dbReference type="EMBL" id="M59781">
    <property type="protein sequence ID" value="AAA22311.1"/>
    <property type="molecule type" value="Genomic_DNA"/>
</dbReference>
<dbReference type="EMBL" id="AL009126">
    <property type="protein sequence ID" value="CAB13506.1"/>
    <property type="molecule type" value="Genomic_DNA"/>
</dbReference>
<dbReference type="EMBL" id="M86738">
    <property type="protein sequence ID" value="AAA22450.1"/>
    <property type="molecule type" value="Genomic_DNA"/>
</dbReference>
<dbReference type="EMBL" id="M87005">
    <property type="protein sequence ID" value="AAA22451.1"/>
    <property type="molecule type" value="Genomic_DNA"/>
</dbReference>
<dbReference type="PIR" id="A40874">
    <property type="entry name" value="A40874"/>
</dbReference>
<dbReference type="RefSeq" id="NP_389515.1">
    <property type="nucleotide sequence ID" value="NC_000964.3"/>
</dbReference>
<dbReference type="RefSeq" id="WP_003244957.1">
    <property type="nucleotide sequence ID" value="NZ_OZ025638.1"/>
</dbReference>
<dbReference type="SMR" id="P24072"/>
<dbReference type="FunCoup" id="P24072">
    <property type="interactions" value="298"/>
</dbReference>
<dbReference type="STRING" id="224308.BSU16330"/>
<dbReference type="jPOST" id="P24072"/>
<dbReference type="PaxDb" id="224308-BSU16330"/>
<dbReference type="EnsemblBacteria" id="CAB13506">
    <property type="protein sequence ID" value="CAB13506"/>
    <property type="gene ID" value="BSU_16330"/>
</dbReference>
<dbReference type="GeneID" id="940120"/>
<dbReference type="KEGG" id="bsu:BSU16330"/>
<dbReference type="PATRIC" id="fig|224308.179.peg.1774"/>
<dbReference type="eggNOG" id="COG2201">
    <property type="taxonomic scope" value="Bacteria"/>
</dbReference>
<dbReference type="InParanoid" id="P24072"/>
<dbReference type="OrthoDB" id="9790669at2"/>
<dbReference type="PhylomeDB" id="P24072"/>
<dbReference type="BioCyc" id="BSUB:BSU16330-MONOMER"/>
<dbReference type="Proteomes" id="UP000001570">
    <property type="component" value="Chromosome"/>
</dbReference>
<dbReference type="GO" id="GO:0005737">
    <property type="term" value="C:cytoplasm"/>
    <property type="evidence" value="ECO:0007669"/>
    <property type="project" value="UniProtKB-SubCell"/>
</dbReference>
<dbReference type="GO" id="GO:0046872">
    <property type="term" value="F:metal ion binding"/>
    <property type="evidence" value="ECO:0007669"/>
    <property type="project" value="UniProtKB-KW"/>
</dbReference>
<dbReference type="GO" id="GO:0071978">
    <property type="term" value="P:bacterial-type flagellum-dependent swarming motility"/>
    <property type="evidence" value="ECO:0000315"/>
    <property type="project" value="CACAO"/>
</dbReference>
<dbReference type="GO" id="GO:0006935">
    <property type="term" value="P:chemotaxis"/>
    <property type="evidence" value="ECO:0007669"/>
    <property type="project" value="UniProtKB-KW"/>
</dbReference>
<dbReference type="GO" id="GO:0000160">
    <property type="term" value="P:phosphorelay signal transduction system"/>
    <property type="evidence" value="ECO:0007669"/>
    <property type="project" value="UniProtKB-KW"/>
</dbReference>
<dbReference type="CDD" id="cd17542">
    <property type="entry name" value="REC_CheY"/>
    <property type="match status" value="1"/>
</dbReference>
<dbReference type="Gene3D" id="3.40.50.2300">
    <property type="match status" value="1"/>
</dbReference>
<dbReference type="InterPro" id="IPR011006">
    <property type="entry name" value="CheY-like_superfamily"/>
</dbReference>
<dbReference type="InterPro" id="IPR001789">
    <property type="entry name" value="Sig_transdc_resp-reg_receiver"/>
</dbReference>
<dbReference type="InterPro" id="IPR052048">
    <property type="entry name" value="ST_Response_Regulator"/>
</dbReference>
<dbReference type="PANTHER" id="PTHR43228">
    <property type="entry name" value="TWO-COMPONENT RESPONSE REGULATOR"/>
    <property type="match status" value="1"/>
</dbReference>
<dbReference type="PANTHER" id="PTHR43228:SF1">
    <property type="entry name" value="TWO-COMPONENT RESPONSE REGULATOR ARR22"/>
    <property type="match status" value="1"/>
</dbReference>
<dbReference type="Pfam" id="PF00072">
    <property type="entry name" value="Response_reg"/>
    <property type="match status" value="1"/>
</dbReference>
<dbReference type="SMART" id="SM00448">
    <property type="entry name" value="REC"/>
    <property type="match status" value="1"/>
</dbReference>
<dbReference type="SUPFAM" id="SSF52172">
    <property type="entry name" value="CheY-like"/>
    <property type="match status" value="1"/>
</dbReference>
<dbReference type="PROSITE" id="PS50110">
    <property type="entry name" value="RESPONSE_REGULATORY"/>
    <property type="match status" value="1"/>
</dbReference>
<keyword id="KW-0145">Chemotaxis</keyword>
<keyword id="KW-0963">Cytoplasm</keyword>
<keyword id="KW-0903">Direct protein sequencing</keyword>
<keyword id="KW-0460">Magnesium</keyword>
<keyword id="KW-0479">Metal-binding</keyword>
<keyword id="KW-0597">Phosphoprotein</keyword>
<keyword id="KW-1185">Reference proteome</keyword>
<keyword id="KW-0902">Two-component regulatory system</keyword>
<name>CHEY_BACSU</name>
<organism>
    <name type="scientific">Bacillus subtilis (strain 168)</name>
    <dbReference type="NCBI Taxonomy" id="224308"/>
    <lineage>
        <taxon>Bacteria</taxon>
        <taxon>Bacillati</taxon>
        <taxon>Bacillota</taxon>
        <taxon>Bacilli</taxon>
        <taxon>Bacillales</taxon>
        <taxon>Bacillaceae</taxon>
        <taxon>Bacillus</taxon>
    </lineage>
</organism>